<name>HIS8_METM7</name>
<dbReference type="EC" id="2.6.1.9" evidence="1"/>
<dbReference type="EMBL" id="CP000745">
    <property type="protein sequence ID" value="ABR65532.1"/>
    <property type="molecule type" value="Genomic_DNA"/>
</dbReference>
<dbReference type="SMR" id="A6VGF6"/>
<dbReference type="STRING" id="426368.MmarC7_0463"/>
<dbReference type="KEGG" id="mmz:MmarC7_0463"/>
<dbReference type="eggNOG" id="arCOG04273">
    <property type="taxonomic scope" value="Archaea"/>
</dbReference>
<dbReference type="HOGENOM" id="CLU_017584_3_3_2"/>
<dbReference type="OrthoDB" id="9929at2157"/>
<dbReference type="UniPathway" id="UPA00031">
    <property type="reaction ID" value="UER00012"/>
</dbReference>
<dbReference type="GO" id="GO:0004400">
    <property type="term" value="F:histidinol-phosphate transaminase activity"/>
    <property type="evidence" value="ECO:0007669"/>
    <property type="project" value="UniProtKB-UniRule"/>
</dbReference>
<dbReference type="GO" id="GO:0030170">
    <property type="term" value="F:pyridoxal phosphate binding"/>
    <property type="evidence" value="ECO:0007669"/>
    <property type="project" value="InterPro"/>
</dbReference>
<dbReference type="GO" id="GO:0000105">
    <property type="term" value="P:L-histidine biosynthetic process"/>
    <property type="evidence" value="ECO:0007669"/>
    <property type="project" value="UniProtKB-UniRule"/>
</dbReference>
<dbReference type="CDD" id="cd00609">
    <property type="entry name" value="AAT_like"/>
    <property type="match status" value="1"/>
</dbReference>
<dbReference type="Gene3D" id="3.90.1150.10">
    <property type="entry name" value="Aspartate Aminotransferase, domain 1"/>
    <property type="match status" value="1"/>
</dbReference>
<dbReference type="Gene3D" id="3.40.640.10">
    <property type="entry name" value="Type I PLP-dependent aspartate aminotransferase-like (Major domain)"/>
    <property type="match status" value="1"/>
</dbReference>
<dbReference type="HAMAP" id="MF_01023">
    <property type="entry name" value="HisC_aminotrans_2"/>
    <property type="match status" value="1"/>
</dbReference>
<dbReference type="InterPro" id="IPR004839">
    <property type="entry name" value="Aminotransferase_I/II_large"/>
</dbReference>
<dbReference type="InterPro" id="IPR005861">
    <property type="entry name" value="HisP_aminotrans"/>
</dbReference>
<dbReference type="InterPro" id="IPR015424">
    <property type="entry name" value="PyrdxlP-dep_Trfase"/>
</dbReference>
<dbReference type="InterPro" id="IPR015421">
    <property type="entry name" value="PyrdxlP-dep_Trfase_major"/>
</dbReference>
<dbReference type="InterPro" id="IPR015422">
    <property type="entry name" value="PyrdxlP-dep_Trfase_small"/>
</dbReference>
<dbReference type="NCBIfam" id="TIGR01141">
    <property type="entry name" value="hisC"/>
    <property type="match status" value="1"/>
</dbReference>
<dbReference type="PANTHER" id="PTHR42885:SF2">
    <property type="entry name" value="HISTIDINOL-PHOSPHATE AMINOTRANSFERASE"/>
    <property type="match status" value="1"/>
</dbReference>
<dbReference type="PANTHER" id="PTHR42885">
    <property type="entry name" value="HISTIDINOL-PHOSPHATE AMINOTRANSFERASE-RELATED"/>
    <property type="match status" value="1"/>
</dbReference>
<dbReference type="Pfam" id="PF00155">
    <property type="entry name" value="Aminotran_1_2"/>
    <property type="match status" value="1"/>
</dbReference>
<dbReference type="SUPFAM" id="SSF53383">
    <property type="entry name" value="PLP-dependent transferases"/>
    <property type="match status" value="1"/>
</dbReference>
<organism>
    <name type="scientific">Methanococcus maripaludis (strain C7 / ATCC BAA-1331)</name>
    <dbReference type="NCBI Taxonomy" id="426368"/>
    <lineage>
        <taxon>Archaea</taxon>
        <taxon>Methanobacteriati</taxon>
        <taxon>Methanobacteriota</taxon>
        <taxon>Methanomada group</taxon>
        <taxon>Methanococci</taxon>
        <taxon>Methanococcales</taxon>
        <taxon>Methanococcaceae</taxon>
        <taxon>Methanococcus</taxon>
    </lineage>
</organism>
<keyword id="KW-0028">Amino-acid biosynthesis</keyword>
<keyword id="KW-0032">Aminotransferase</keyword>
<keyword id="KW-0368">Histidine biosynthesis</keyword>
<keyword id="KW-0663">Pyridoxal phosphate</keyword>
<keyword id="KW-0808">Transferase</keyword>
<reference key="1">
    <citation type="submission" date="2007-06" db="EMBL/GenBank/DDBJ databases">
        <title>Complete sequence of Methanococcus maripaludis C7.</title>
        <authorList>
            <consortium name="US DOE Joint Genome Institute"/>
            <person name="Copeland A."/>
            <person name="Lucas S."/>
            <person name="Lapidus A."/>
            <person name="Barry K."/>
            <person name="Glavina del Rio T."/>
            <person name="Dalin E."/>
            <person name="Tice H."/>
            <person name="Pitluck S."/>
            <person name="Clum A."/>
            <person name="Schmutz J."/>
            <person name="Larimer F."/>
            <person name="Land M."/>
            <person name="Hauser L."/>
            <person name="Kyrpides N."/>
            <person name="Anderson I."/>
            <person name="Sieprawska-Lupa M."/>
            <person name="Whitman W.B."/>
            <person name="Richardson P."/>
        </authorList>
    </citation>
    <scope>NUCLEOTIDE SEQUENCE [LARGE SCALE GENOMIC DNA]</scope>
    <source>
        <strain>C7 / ATCC BAA-1331</strain>
    </source>
</reference>
<evidence type="ECO:0000255" key="1">
    <source>
        <dbReference type="HAMAP-Rule" id="MF_01023"/>
    </source>
</evidence>
<proteinExistence type="inferred from homology"/>
<feature type="chain" id="PRO_0000319799" description="Histidinol-phosphate aminotransferase">
    <location>
        <begin position="1"/>
        <end position="371"/>
    </location>
</feature>
<feature type="modified residue" description="N6-(pyridoxal phosphate)lysine" evidence="1">
    <location>
        <position position="228"/>
    </location>
</feature>
<comment type="catalytic activity">
    <reaction evidence="1">
        <text>L-histidinol phosphate + 2-oxoglutarate = 3-(imidazol-4-yl)-2-oxopropyl phosphate + L-glutamate</text>
        <dbReference type="Rhea" id="RHEA:23744"/>
        <dbReference type="ChEBI" id="CHEBI:16810"/>
        <dbReference type="ChEBI" id="CHEBI:29985"/>
        <dbReference type="ChEBI" id="CHEBI:57766"/>
        <dbReference type="ChEBI" id="CHEBI:57980"/>
        <dbReference type="EC" id="2.6.1.9"/>
    </reaction>
</comment>
<comment type="cofactor">
    <cofactor evidence="1">
        <name>pyridoxal 5'-phosphate</name>
        <dbReference type="ChEBI" id="CHEBI:597326"/>
    </cofactor>
</comment>
<comment type="pathway">
    <text evidence="1">Amino-acid biosynthesis; L-histidine biosynthesis; L-histidine from 5-phospho-alpha-D-ribose 1-diphosphate: step 7/9.</text>
</comment>
<comment type="similarity">
    <text evidence="1">Belongs to the class-II pyridoxal-phosphate-dependent aminotransferase family. Histidinol-phosphate aminotransferase subfamily.</text>
</comment>
<sequence>MSIDDKVRAIVKEFKAYVPGKSKEEIARNYGIDPEKIIKLGSNENPWGCSPKIAEKLMDEVSKLHQYPQPINPELMDEISKFTKMPVENIIVGGDGADEVIDNIMRILIDEGDEVIIPIPTFTQYAISAKIHGANIKWAKFDEENEFKLDIESVLNNITEKTKAIFLCTPNNPTGNVIPTEDIKKIVESTDALVMIDHAYIEYSNEDYDLTDWALKYDNVLVLRTFSKVFGLAGQRVGYGVTSKKIVDYMMRIKPIFSLTRASQASAITALQDKEFFEKCLNEGIESREEIYNGLKKFKQLEVYPTEANYMLVKVKNGMNSSEFCEVLLKKGVIVRDCYSFEGLEPYYFRVSIGTFDENERFLKIMSEVVE</sequence>
<protein>
    <recommendedName>
        <fullName evidence="1">Histidinol-phosphate aminotransferase</fullName>
        <ecNumber evidence="1">2.6.1.9</ecNumber>
    </recommendedName>
    <alternativeName>
        <fullName evidence="1">Imidazole acetol-phosphate transaminase</fullName>
    </alternativeName>
</protein>
<gene>
    <name evidence="1" type="primary">hisC</name>
    <name type="ordered locus">MmarC7_0463</name>
</gene>
<accession>A6VGF6</accession>